<gene>
    <name evidence="1" type="primary">pepA</name>
    <name type="ordered locus">P9215_15611</name>
</gene>
<keyword id="KW-0031">Aminopeptidase</keyword>
<keyword id="KW-0963">Cytoplasm</keyword>
<keyword id="KW-0378">Hydrolase</keyword>
<keyword id="KW-0464">Manganese</keyword>
<keyword id="KW-0479">Metal-binding</keyword>
<keyword id="KW-0645">Protease</keyword>
<accession>A8G6E3</accession>
<evidence type="ECO:0000255" key="1">
    <source>
        <dbReference type="HAMAP-Rule" id="MF_00181"/>
    </source>
</evidence>
<proteinExistence type="inferred from homology"/>
<comment type="function">
    <text evidence="1">Presumably involved in the processing and regular turnover of intracellular proteins. Catalyzes the removal of unsubstituted N-terminal amino acids from various peptides.</text>
</comment>
<comment type="catalytic activity">
    <reaction evidence="1">
        <text>Release of an N-terminal amino acid, Xaa-|-Yaa-, in which Xaa is preferably Leu, but may be other amino acids including Pro although not Arg or Lys, and Yaa may be Pro. Amino acid amides and methyl esters are also readily hydrolyzed, but rates on arylamides are exceedingly low.</text>
        <dbReference type="EC" id="3.4.11.1"/>
    </reaction>
</comment>
<comment type="catalytic activity">
    <reaction evidence="1">
        <text>Release of an N-terminal amino acid, preferentially leucine, but not glutamic or aspartic acids.</text>
        <dbReference type="EC" id="3.4.11.10"/>
    </reaction>
</comment>
<comment type="cofactor">
    <cofactor evidence="1">
        <name>Mn(2+)</name>
        <dbReference type="ChEBI" id="CHEBI:29035"/>
    </cofactor>
    <text evidence="1">Binds 2 manganese ions per subunit.</text>
</comment>
<comment type="subcellular location">
    <subcellularLocation>
        <location evidence="1">Cytoplasm</location>
    </subcellularLocation>
</comment>
<comment type="similarity">
    <text evidence="1">Belongs to the peptidase M17 family.</text>
</comment>
<sequence length="490" mass="53570">MQFSTFQKNLDDWQGSSLIFGVLEEEIASQLENIKFVIDPKLLLKKVTQKKFKGEKGEILSFEFLDQNLETLFIVGLGKLKDLNKSDIENSIGNLVRKTVDKNEKMSILLPWEFINSQLEINQLAESVRLSAYKDNRFNKKKDEKKVLKEIEFLNLKKFENISFEETAQICEGVELARRLVAAPPNSLTPQEMSIQASQIAKDHGLGVKILEAKDCEDLGMGAYLAVAKGSDLDPKFIHLTLKSEGPIKEKIALVGKGLTFDSGGYNLKVGASQIEMMKYDMGGSAAVLGAAKALGAIKPKGLEIHFIVASCENMINGSAVHPGDVVKASNGKTIEINNTDAEGRLTLADALTYASNLKPDSIIDLATLTGAIVVALGNDVAGFWSNNDNLANDLKAASAQSGEELWQMPLQKSYKEGLKSHIADMKNTGPRAGGSITAALFLEEFFDKEIKWAHIDIAGTCWTDKNKGINPSGATGFGVKTLVQWIKNK</sequence>
<feature type="chain" id="PRO_1000058389" description="Probable cytosol aminopeptidase">
    <location>
        <begin position="1"/>
        <end position="490"/>
    </location>
</feature>
<feature type="active site" evidence="1">
    <location>
        <position position="269"/>
    </location>
</feature>
<feature type="active site" evidence="1">
    <location>
        <position position="345"/>
    </location>
</feature>
<feature type="binding site" evidence="1">
    <location>
        <position position="257"/>
    </location>
    <ligand>
        <name>Mn(2+)</name>
        <dbReference type="ChEBI" id="CHEBI:29035"/>
        <label>2</label>
    </ligand>
</feature>
<feature type="binding site" evidence="1">
    <location>
        <position position="262"/>
    </location>
    <ligand>
        <name>Mn(2+)</name>
        <dbReference type="ChEBI" id="CHEBI:29035"/>
        <label>1</label>
    </ligand>
</feature>
<feature type="binding site" evidence="1">
    <location>
        <position position="262"/>
    </location>
    <ligand>
        <name>Mn(2+)</name>
        <dbReference type="ChEBI" id="CHEBI:29035"/>
        <label>2</label>
    </ligand>
</feature>
<feature type="binding site" evidence="1">
    <location>
        <position position="281"/>
    </location>
    <ligand>
        <name>Mn(2+)</name>
        <dbReference type="ChEBI" id="CHEBI:29035"/>
        <label>2</label>
    </ligand>
</feature>
<feature type="binding site" evidence="1">
    <location>
        <position position="341"/>
    </location>
    <ligand>
        <name>Mn(2+)</name>
        <dbReference type="ChEBI" id="CHEBI:29035"/>
        <label>1</label>
    </ligand>
</feature>
<feature type="binding site" evidence="1">
    <location>
        <position position="343"/>
    </location>
    <ligand>
        <name>Mn(2+)</name>
        <dbReference type="ChEBI" id="CHEBI:29035"/>
        <label>1</label>
    </ligand>
</feature>
<feature type="binding site" evidence="1">
    <location>
        <position position="343"/>
    </location>
    <ligand>
        <name>Mn(2+)</name>
        <dbReference type="ChEBI" id="CHEBI:29035"/>
        <label>2</label>
    </ligand>
</feature>
<protein>
    <recommendedName>
        <fullName evidence="1">Probable cytosol aminopeptidase</fullName>
        <ecNumber evidence="1">3.4.11.1</ecNumber>
    </recommendedName>
    <alternativeName>
        <fullName evidence="1">Leucine aminopeptidase</fullName>
        <shortName evidence="1">LAP</shortName>
        <ecNumber evidence="1">3.4.11.10</ecNumber>
    </alternativeName>
    <alternativeName>
        <fullName evidence="1">Leucyl aminopeptidase</fullName>
    </alternativeName>
</protein>
<name>AMPA_PROM2</name>
<organism>
    <name type="scientific">Prochlorococcus marinus (strain MIT 9215)</name>
    <dbReference type="NCBI Taxonomy" id="93060"/>
    <lineage>
        <taxon>Bacteria</taxon>
        <taxon>Bacillati</taxon>
        <taxon>Cyanobacteriota</taxon>
        <taxon>Cyanophyceae</taxon>
        <taxon>Synechococcales</taxon>
        <taxon>Prochlorococcaceae</taxon>
        <taxon>Prochlorococcus</taxon>
    </lineage>
</organism>
<dbReference type="EC" id="3.4.11.1" evidence="1"/>
<dbReference type="EC" id="3.4.11.10" evidence="1"/>
<dbReference type="EMBL" id="CP000825">
    <property type="protein sequence ID" value="ABV51174.1"/>
    <property type="molecule type" value="Genomic_DNA"/>
</dbReference>
<dbReference type="RefSeq" id="WP_012008215.1">
    <property type="nucleotide sequence ID" value="NC_009840.1"/>
</dbReference>
<dbReference type="SMR" id="A8G6E3"/>
<dbReference type="STRING" id="93060.P9215_15611"/>
<dbReference type="MEROPS" id="M17.A01"/>
<dbReference type="KEGG" id="pmh:P9215_15611"/>
<dbReference type="eggNOG" id="COG0260">
    <property type="taxonomic scope" value="Bacteria"/>
</dbReference>
<dbReference type="HOGENOM" id="CLU_013734_5_1_3"/>
<dbReference type="OrthoDB" id="9809354at2"/>
<dbReference type="Proteomes" id="UP000002014">
    <property type="component" value="Chromosome"/>
</dbReference>
<dbReference type="GO" id="GO:0005737">
    <property type="term" value="C:cytoplasm"/>
    <property type="evidence" value="ECO:0007669"/>
    <property type="project" value="UniProtKB-SubCell"/>
</dbReference>
<dbReference type="GO" id="GO:0030145">
    <property type="term" value="F:manganese ion binding"/>
    <property type="evidence" value="ECO:0007669"/>
    <property type="project" value="UniProtKB-UniRule"/>
</dbReference>
<dbReference type="GO" id="GO:0070006">
    <property type="term" value="F:metalloaminopeptidase activity"/>
    <property type="evidence" value="ECO:0007669"/>
    <property type="project" value="InterPro"/>
</dbReference>
<dbReference type="GO" id="GO:0006508">
    <property type="term" value="P:proteolysis"/>
    <property type="evidence" value="ECO:0007669"/>
    <property type="project" value="UniProtKB-KW"/>
</dbReference>
<dbReference type="CDD" id="cd00433">
    <property type="entry name" value="Peptidase_M17"/>
    <property type="match status" value="1"/>
</dbReference>
<dbReference type="Gene3D" id="3.40.220.10">
    <property type="entry name" value="Leucine Aminopeptidase, subunit E, domain 1"/>
    <property type="match status" value="1"/>
</dbReference>
<dbReference type="Gene3D" id="3.40.630.10">
    <property type="entry name" value="Zn peptidases"/>
    <property type="match status" value="1"/>
</dbReference>
<dbReference type="HAMAP" id="MF_00181">
    <property type="entry name" value="Cytosol_peptidase_M17"/>
    <property type="match status" value="1"/>
</dbReference>
<dbReference type="InterPro" id="IPR011356">
    <property type="entry name" value="Leucine_aapep/pepB"/>
</dbReference>
<dbReference type="InterPro" id="IPR043472">
    <property type="entry name" value="Macro_dom-like"/>
</dbReference>
<dbReference type="InterPro" id="IPR000819">
    <property type="entry name" value="Peptidase_M17_C"/>
</dbReference>
<dbReference type="InterPro" id="IPR023042">
    <property type="entry name" value="Peptidase_M17_leu_NH2_pept"/>
</dbReference>
<dbReference type="InterPro" id="IPR008283">
    <property type="entry name" value="Peptidase_M17_N"/>
</dbReference>
<dbReference type="NCBIfam" id="NF002073">
    <property type="entry name" value="PRK00913.1-2"/>
    <property type="match status" value="1"/>
</dbReference>
<dbReference type="NCBIfam" id="NF002074">
    <property type="entry name" value="PRK00913.1-4"/>
    <property type="match status" value="1"/>
</dbReference>
<dbReference type="NCBIfam" id="NF002076">
    <property type="entry name" value="PRK00913.2-3"/>
    <property type="match status" value="1"/>
</dbReference>
<dbReference type="PANTHER" id="PTHR11963:SF23">
    <property type="entry name" value="CYTOSOL AMINOPEPTIDASE"/>
    <property type="match status" value="1"/>
</dbReference>
<dbReference type="PANTHER" id="PTHR11963">
    <property type="entry name" value="LEUCINE AMINOPEPTIDASE-RELATED"/>
    <property type="match status" value="1"/>
</dbReference>
<dbReference type="Pfam" id="PF00883">
    <property type="entry name" value="Peptidase_M17"/>
    <property type="match status" value="1"/>
</dbReference>
<dbReference type="Pfam" id="PF02789">
    <property type="entry name" value="Peptidase_M17_N"/>
    <property type="match status" value="1"/>
</dbReference>
<dbReference type="PRINTS" id="PR00481">
    <property type="entry name" value="LAMNOPPTDASE"/>
</dbReference>
<dbReference type="SUPFAM" id="SSF52949">
    <property type="entry name" value="Macro domain-like"/>
    <property type="match status" value="1"/>
</dbReference>
<dbReference type="SUPFAM" id="SSF53187">
    <property type="entry name" value="Zn-dependent exopeptidases"/>
    <property type="match status" value="1"/>
</dbReference>
<dbReference type="PROSITE" id="PS00631">
    <property type="entry name" value="CYTOSOL_AP"/>
    <property type="match status" value="1"/>
</dbReference>
<reference key="1">
    <citation type="journal article" date="2007" name="PLoS Genet.">
        <title>Patterns and implications of gene gain and loss in the evolution of Prochlorococcus.</title>
        <authorList>
            <person name="Kettler G.C."/>
            <person name="Martiny A.C."/>
            <person name="Huang K."/>
            <person name="Zucker J."/>
            <person name="Coleman M.L."/>
            <person name="Rodrigue S."/>
            <person name="Chen F."/>
            <person name="Lapidus A."/>
            <person name="Ferriera S."/>
            <person name="Johnson J."/>
            <person name="Steglich C."/>
            <person name="Church G.M."/>
            <person name="Richardson P."/>
            <person name="Chisholm S.W."/>
        </authorList>
    </citation>
    <scope>NUCLEOTIDE SEQUENCE [LARGE SCALE GENOMIC DNA]</scope>
    <source>
        <strain>MIT 9215</strain>
    </source>
</reference>